<accession>Q49WG6</accession>
<reference key="1">
    <citation type="journal article" date="2005" name="Proc. Natl. Acad. Sci. U.S.A.">
        <title>Whole genome sequence of Staphylococcus saprophyticus reveals the pathogenesis of uncomplicated urinary tract infection.</title>
        <authorList>
            <person name="Kuroda M."/>
            <person name="Yamashita A."/>
            <person name="Hirakawa H."/>
            <person name="Kumano M."/>
            <person name="Morikawa K."/>
            <person name="Higashide M."/>
            <person name="Maruyama A."/>
            <person name="Inose Y."/>
            <person name="Matoba K."/>
            <person name="Toh H."/>
            <person name="Kuhara S."/>
            <person name="Hattori M."/>
            <person name="Ohta T."/>
        </authorList>
    </citation>
    <scope>NUCLEOTIDE SEQUENCE [LARGE SCALE GENOMIC DNA]</scope>
    <source>
        <strain>ATCC 15305 / DSM 20229 / NCIMB 8711 / NCTC 7292 / S-41</strain>
    </source>
</reference>
<keyword id="KW-0460">Magnesium</keyword>
<keyword id="KW-0464">Manganese</keyword>
<keyword id="KW-0474">Menaquinone biosynthesis</keyword>
<keyword id="KW-0479">Metal-binding</keyword>
<keyword id="KW-1185">Reference proteome</keyword>
<keyword id="KW-0786">Thiamine pyrophosphate</keyword>
<keyword id="KW-0808">Transferase</keyword>
<feature type="chain" id="PRO_0000341866" description="2-succinyl-5-enolpyruvyl-6-hydroxy-3-cyclohexene-1-carboxylate synthase">
    <location>
        <begin position="1"/>
        <end position="560"/>
    </location>
</feature>
<comment type="function">
    <text evidence="1">Catalyzes the thiamine diphosphate-dependent decarboxylation of 2-oxoglutarate and the subsequent addition of the resulting succinic semialdehyde-thiamine pyrophosphate anion to isochorismate to yield 2-succinyl-5-enolpyruvyl-6-hydroxy-3-cyclohexene-1-carboxylate (SEPHCHC).</text>
</comment>
<comment type="catalytic activity">
    <reaction evidence="1">
        <text>isochorismate + 2-oxoglutarate + H(+) = 5-enolpyruvoyl-6-hydroxy-2-succinyl-cyclohex-3-ene-1-carboxylate + CO2</text>
        <dbReference type="Rhea" id="RHEA:25593"/>
        <dbReference type="ChEBI" id="CHEBI:15378"/>
        <dbReference type="ChEBI" id="CHEBI:16526"/>
        <dbReference type="ChEBI" id="CHEBI:16810"/>
        <dbReference type="ChEBI" id="CHEBI:29780"/>
        <dbReference type="ChEBI" id="CHEBI:58818"/>
        <dbReference type="EC" id="2.2.1.9"/>
    </reaction>
</comment>
<comment type="cofactor">
    <cofactor evidence="1">
        <name>Mg(2+)</name>
        <dbReference type="ChEBI" id="CHEBI:18420"/>
    </cofactor>
    <cofactor evidence="1">
        <name>Mn(2+)</name>
        <dbReference type="ChEBI" id="CHEBI:29035"/>
    </cofactor>
</comment>
<comment type="cofactor">
    <cofactor evidence="1">
        <name>thiamine diphosphate</name>
        <dbReference type="ChEBI" id="CHEBI:58937"/>
    </cofactor>
    <text evidence="1">Binds 1 thiamine pyrophosphate per subunit.</text>
</comment>
<comment type="pathway">
    <text evidence="1">Quinol/quinone metabolism; 1,4-dihydroxy-2-naphthoate biosynthesis; 1,4-dihydroxy-2-naphthoate from chorismate: step 2/7.</text>
</comment>
<comment type="pathway">
    <text evidence="1">Quinol/quinone metabolism; menaquinone biosynthesis.</text>
</comment>
<comment type="subunit">
    <text evidence="1">Homodimer.</text>
</comment>
<comment type="similarity">
    <text evidence="1">Belongs to the TPP enzyme family. MenD subfamily.</text>
</comment>
<dbReference type="EC" id="2.2.1.9" evidence="1"/>
<dbReference type="EMBL" id="AP008934">
    <property type="protein sequence ID" value="BAE18893.1"/>
    <property type="molecule type" value="Genomic_DNA"/>
</dbReference>
<dbReference type="RefSeq" id="WP_011303458.1">
    <property type="nucleotide sequence ID" value="NZ_MTGA01000039.1"/>
</dbReference>
<dbReference type="SMR" id="Q49WG6"/>
<dbReference type="GeneID" id="3616657"/>
<dbReference type="KEGG" id="ssp:SSP1748"/>
<dbReference type="PATRIC" id="fig|342451.11.peg.1746"/>
<dbReference type="eggNOG" id="COG1165">
    <property type="taxonomic scope" value="Bacteria"/>
</dbReference>
<dbReference type="HOGENOM" id="CLU_006051_3_0_9"/>
<dbReference type="OrthoDB" id="9791859at2"/>
<dbReference type="UniPathway" id="UPA00079"/>
<dbReference type="UniPathway" id="UPA01057">
    <property type="reaction ID" value="UER00164"/>
</dbReference>
<dbReference type="Proteomes" id="UP000006371">
    <property type="component" value="Chromosome"/>
</dbReference>
<dbReference type="GO" id="GO:0070204">
    <property type="term" value="F:2-succinyl-5-enolpyruvyl-6-hydroxy-3-cyclohexene-1-carboxylic-acid synthase activity"/>
    <property type="evidence" value="ECO:0007669"/>
    <property type="project" value="UniProtKB-UniRule"/>
</dbReference>
<dbReference type="GO" id="GO:0000287">
    <property type="term" value="F:magnesium ion binding"/>
    <property type="evidence" value="ECO:0007669"/>
    <property type="project" value="UniProtKB-UniRule"/>
</dbReference>
<dbReference type="GO" id="GO:0030145">
    <property type="term" value="F:manganese ion binding"/>
    <property type="evidence" value="ECO:0007669"/>
    <property type="project" value="UniProtKB-UniRule"/>
</dbReference>
<dbReference type="GO" id="GO:0030976">
    <property type="term" value="F:thiamine pyrophosphate binding"/>
    <property type="evidence" value="ECO:0007669"/>
    <property type="project" value="UniProtKB-UniRule"/>
</dbReference>
<dbReference type="GO" id="GO:0009234">
    <property type="term" value="P:menaquinone biosynthetic process"/>
    <property type="evidence" value="ECO:0007669"/>
    <property type="project" value="UniProtKB-UniRule"/>
</dbReference>
<dbReference type="CDD" id="cd07037">
    <property type="entry name" value="TPP_PYR_MenD"/>
    <property type="match status" value="1"/>
</dbReference>
<dbReference type="CDD" id="cd02009">
    <property type="entry name" value="TPP_SHCHC_synthase"/>
    <property type="match status" value="1"/>
</dbReference>
<dbReference type="Gene3D" id="3.40.50.970">
    <property type="match status" value="2"/>
</dbReference>
<dbReference type="Gene3D" id="3.40.50.1220">
    <property type="entry name" value="TPP-binding domain"/>
    <property type="match status" value="1"/>
</dbReference>
<dbReference type="HAMAP" id="MF_01659">
    <property type="entry name" value="MenD"/>
    <property type="match status" value="1"/>
</dbReference>
<dbReference type="InterPro" id="IPR029035">
    <property type="entry name" value="DHS-like_NAD/FAD-binding_dom"/>
</dbReference>
<dbReference type="InterPro" id="IPR004433">
    <property type="entry name" value="MenaQ_synth_MenD"/>
</dbReference>
<dbReference type="InterPro" id="IPR032264">
    <property type="entry name" value="MenD_middle"/>
</dbReference>
<dbReference type="InterPro" id="IPR029061">
    <property type="entry name" value="THDP-binding"/>
</dbReference>
<dbReference type="InterPro" id="IPR012001">
    <property type="entry name" value="Thiamin_PyroP_enz_TPP-bd_dom"/>
</dbReference>
<dbReference type="NCBIfam" id="TIGR00173">
    <property type="entry name" value="menD"/>
    <property type="match status" value="1"/>
</dbReference>
<dbReference type="PANTHER" id="PTHR42916">
    <property type="entry name" value="2-SUCCINYL-5-ENOLPYRUVYL-6-HYDROXY-3-CYCLOHEXENE-1-CARBOXYLATE SYNTHASE"/>
    <property type="match status" value="1"/>
</dbReference>
<dbReference type="PANTHER" id="PTHR42916:SF1">
    <property type="entry name" value="PROTEIN PHYLLO, CHLOROPLASTIC"/>
    <property type="match status" value="1"/>
</dbReference>
<dbReference type="Pfam" id="PF16582">
    <property type="entry name" value="TPP_enzyme_M_2"/>
    <property type="match status" value="1"/>
</dbReference>
<dbReference type="Pfam" id="PF02776">
    <property type="entry name" value="TPP_enzyme_N"/>
    <property type="match status" value="1"/>
</dbReference>
<dbReference type="PIRSF" id="PIRSF004983">
    <property type="entry name" value="MenD"/>
    <property type="match status" value="1"/>
</dbReference>
<dbReference type="SUPFAM" id="SSF52467">
    <property type="entry name" value="DHS-like NAD/FAD-binding domain"/>
    <property type="match status" value="1"/>
</dbReference>
<dbReference type="SUPFAM" id="SSF52518">
    <property type="entry name" value="Thiamin diphosphate-binding fold (THDP-binding)"/>
    <property type="match status" value="2"/>
</dbReference>
<evidence type="ECO:0000255" key="1">
    <source>
        <dbReference type="HAMAP-Rule" id="MF_01659"/>
    </source>
</evidence>
<name>MEND_STAS1</name>
<sequence>MNNHTDALTKQVFTIVSELYAYGIREVVISPGSRSTPLAIAIEAHPKLKSWIHPDERSAAFFAMGLMKGSEKPVAILCTSGSAAANYTPAISESSLSHLPLVVLTSDRPHELRGIGAPQAINQTNMFANYVQYQFDFPIAEKNDNEDIMANTIKFQLQKASQFLYGPHRGPIHLNLPFREPLTPNTEKVEWLTSDTKILPHYQKTTSLNEISAMMKKRKGLIIVGDMQHQDVDQILTFSTIHDMPILADPLSQLRREHHPNVVTTYDLLLRSGLELEADFVIRVGKPVISKKLNQWLKVTEAFQILVQNNDRPDAFPITPHVSYEMSANDFFRQLSEMPTVERKQWLEKWQTVEKHAIVEIKDHLRTATDEAAYVGNVLDKLTKDDAIFVSNSMPIRDVDNLFIDCEAEVFANRGANGIDGVTSTALGMAVHKKITLLIGDLAFYHDMNGLLMSKLNDIQLNIVLLNNDGGGIFSYLPQKNEADAYFERLFGTPTGLNFEHTALLYDFAFDRFDTIEAFKYADLSQFGSHIYEIMTHREDNKQQHLKLYKKLSDIIDVTL</sequence>
<protein>
    <recommendedName>
        <fullName evidence="1">2-succinyl-5-enolpyruvyl-6-hydroxy-3-cyclohexene-1-carboxylate synthase</fullName>
        <shortName evidence="1">SEPHCHC synthase</shortName>
        <ecNumber evidence="1">2.2.1.9</ecNumber>
    </recommendedName>
    <alternativeName>
        <fullName evidence="1">Menaquinone biosynthesis protein MenD</fullName>
    </alternativeName>
</protein>
<organism>
    <name type="scientific">Staphylococcus saprophyticus subsp. saprophyticus (strain ATCC 15305 / DSM 20229 / NCIMB 8711 / NCTC 7292 / S-41)</name>
    <dbReference type="NCBI Taxonomy" id="342451"/>
    <lineage>
        <taxon>Bacteria</taxon>
        <taxon>Bacillati</taxon>
        <taxon>Bacillota</taxon>
        <taxon>Bacilli</taxon>
        <taxon>Bacillales</taxon>
        <taxon>Staphylococcaceae</taxon>
        <taxon>Staphylococcus</taxon>
    </lineage>
</organism>
<gene>
    <name evidence="1" type="primary">menD</name>
    <name type="ordered locus">SSP1748</name>
</gene>
<proteinExistence type="inferred from homology"/>